<protein>
    <recommendedName>
        <fullName evidence="1">Argininosuccinate lyase</fullName>
        <shortName evidence="1">ASAL</shortName>
        <ecNumber evidence="1">4.3.2.1</ecNumber>
    </recommendedName>
    <alternativeName>
        <fullName evidence="1">Arginosuccinase</fullName>
    </alternativeName>
</protein>
<dbReference type="EC" id="4.3.2.1" evidence="1"/>
<dbReference type="EMBL" id="CP000672">
    <property type="protein sequence ID" value="ABR00369.1"/>
    <property type="molecule type" value="Genomic_DNA"/>
</dbReference>
<dbReference type="SMR" id="A5UHW3"/>
<dbReference type="KEGG" id="hiq:CGSHiGG_07550"/>
<dbReference type="HOGENOM" id="CLU_027272_2_3_6"/>
<dbReference type="UniPathway" id="UPA00068">
    <property type="reaction ID" value="UER00114"/>
</dbReference>
<dbReference type="Proteomes" id="UP000001990">
    <property type="component" value="Chromosome"/>
</dbReference>
<dbReference type="GO" id="GO:0005829">
    <property type="term" value="C:cytosol"/>
    <property type="evidence" value="ECO:0007669"/>
    <property type="project" value="TreeGrafter"/>
</dbReference>
<dbReference type="GO" id="GO:0004056">
    <property type="term" value="F:argininosuccinate lyase activity"/>
    <property type="evidence" value="ECO:0007669"/>
    <property type="project" value="UniProtKB-UniRule"/>
</dbReference>
<dbReference type="GO" id="GO:0042450">
    <property type="term" value="P:arginine biosynthetic process via ornithine"/>
    <property type="evidence" value="ECO:0007669"/>
    <property type="project" value="InterPro"/>
</dbReference>
<dbReference type="GO" id="GO:0006526">
    <property type="term" value="P:L-arginine biosynthetic process"/>
    <property type="evidence" value="ECO:0007669"/>
    <property type="project" value="UniProtKB-UniRule"/>
</dbReference>
<dbReference type="CDD" id="cd01359">
    <property type="entry name" value="Argininosuccinate_lyase"/>
    <property type="match status" value="1"/>
</dbReference>
<dbReference type="FunFam" id="1.10.40.30:FF:000001">
    <property type="entry name" value="Argininosuccinate lyase"/>
    <property type="match status" value="1"/>
</dbReference>
<dbReference type="FunFam" id="1.20.200.10:FF:000006">
    <property type="entry name" value="Argininosuccinate lyase"/>
    <property type="match status" value="1"/>
</dbReference>
<dbReference type="Gene3D" id="1.10.40.30">
    <property type="entry name" value="Fumarase/aspartase (C-terminal domain)"/>
    <property type="match status" value="1"/>
</dbReference>
<dbReference type="Gene3D" id="1.20.200.10">
    <property type="entry name" value="Fumarase/aspartase (Central domain)"/>
    <property type="match status" value="1"/>
</dbReference>
<dbReference type="Gene3D" id="1.10.275.10">
    <property type="entry name" value="Fumarase/aspartase (N-terminal domain)"/>
    <property type="match status" value="1"/>
</dbReference>
<dbReference type="HAMAP" id="MF_00006">
    <property type="entry name" value="Arg_succ_lyase"/>
    <property type="match status" value="1"/>
</dbReference>
<dbReference type="InterPro" id="IPR029419">
    <property type="entry name" value="Arg_succ_lyase_C"/>
</dbReference>
<dbReference type="InterPro" id="IPR009049">
    <property type="entry name" value="Argininosuccinate_lyase"/>
</dbReference>
<dbReference type="InterPro" id="IPR024083">
    <property type="entry name" value="Fumarase/histidase_N"/>
</dbReference>
<dbReference type="InterPro" id="IPR020557">
    <property type="entry name" value="Fumarate_lyase_CS"/>
</dbReference>
<dbReference type="InterPro" id="IPR000362">
    <property type="entry name" value="Fumarate_lyase_fam"/>
</dbReference>
<dbReference type="InterPro" id="IPR022761">
    <property type="entry name" value="Fumarate_lyase_N"/>
</dbReference>
<dbReference type="InterPro" id="IPR008948">
    <property type="entry name" value="L-Aspartase-like"/>
</dbReference>
<dbReference type="NCBIfam" id="TIGR00838">
    <property type="entry name" value="argH"/>
    <property type="match status" value="1"/>
</dbReference>
<dbReference type="NCBIfam" id="NF008964">
    <property type="entry name" value="PRK12308.1"/>
    <property type="match status" value="1"/>
</dbReference>
<dbReference type="PANTHER" id="PTHR43814">
    <property type="entry name" value="ARGININOSUCCINATE LYASE"/>
    <property type="match status" value="1"/>
</dbReference>
<dbReference type="PANTHER" id="PTHR43814:SF1">
    <property type="entry name" value="ARGININOSUCCINATE LYASE"/>
    <property type="match status" value="1"/>
</dbReference>
<dbReference type="Pfam" id="PF14698">
    <property type="entry name" value="ASL_C2"/>
    <property type="match status" value="1"/>
</dbReference>
<dbReference type="Pfam" id="PF00206">
    <property type="entry name" value="Lyase_1"/>
    <property type="match status" value="1"/>
</dbReference>
<dbReference type="PRINTS" id="PR00145">
    <property type="entry name" value="ARGSUCLYASE"/>
</dbReference>
<dbReference type="PRINTS" id="PR00149">
    <property type="entry name" value="FUMRATELYASE"/>
</dbReference>
<dbReference type="SUPFAM" id="SSF48557">
    <property type="entry name" value="L-aspartase-like"/>
    <property type="match status" value="1"/>
</dbReference>
<dbReference type="PROSITE" id="PS00163">
    <property type="entry name" value="FUMARATE_LYASES"/>
    <property type="match status" value="1"/>
</dbReference>
<comment type="catalytic activity">
    <reaction evidence="1">
        <text>2-(N(omega)-L-arginino)succinate = fumarate + L-arginine</text>
        <dbReference type="Rhea" id="RHEA:24020"/>
        <dbReference type="ChEBI" id="CHEBI:29806"/>
        <dbReference type="ChEBI" id="CHEBI:32682"/>
        <dbReference type="ChEBI" id="CHEBI:57472"/>
        <dbReference type="EC" id="4.3.2.1"/>
    </reaction>
</comment>
<comment type="pathway">
    <text evidence="1">Amino-acid biosynthesis; L-arginine biosynthesis; L-arginine from L-ornithine and carbamoyl phosphate: step 3/3.</text>
</comment>
<comment type="subcellular location">
    <subcellularLocation>
        <location evidence="1">Cytoplasm</location>
    </subcellularLocation>
</comment>
<comment type="similarity">
    <text evidence="1">Belongs to the lyase 1 family. Argininosuccinate lyase subfamily.</text>
</comment>
<gene>
    <name evidence="1" type="primary">argH</name>
    <name type="ordered locus">CGSHiGG_07550</name>
</gene>
<organism>
    <name type="scientific">Haemophilus influenzae (strain PittGG)</name>
    <dbReference type="NCBI Taxonomy" id="374931"/>
    <lineage>
        <taxon>Bacteria</taxon>
        <taxon>Pseudomonadati</taxon>
        <taxon>Pseudomonadota</taxon>
        <taxon>Gammaproteobacteria</taxon>
        <taxon>Pasteurellales</taxon>
        <taxon>Pasteurellaceae</taxon>
        <taxon>Haemophilus</taxon>
    </lineage>
</organism>
<reference key="1">
    <citation type="journal article" date="2007" name="Genome Biol.">
        <title>Characterization and modeling of the Haemophilus influenzae core and supragenomes based on the complete genomic sequences of Rd and 12 clinical nontypeable strains.</title>
        <authorList>
            <person name="Hogg J.S."/>
            <person name="Hu F.Z."/>
            <person name="Janto B."/>
            <person name="Boissy R."/>
            <person name="Hayes J."/>
            <person name="Keefe R."/>
            <person name="Post J.C."/>
            <person name="Ehrlich G.D."/>
        </authorList>
    </citation>
    <scope>NUCLEOTIDE SEQUENCE [LARGE SCALE GENOMIC DNA]</scope>
    <source>
        <strain>PittGG</strain>
    </source>
</reference>
<sequence length="457" mass="51173">MALWGGRFTQAADKRFKDFNDSLRFDYRLAEQDIQGSIGWSKALVKVNVLTVEEQHQLEQALNELLVEVRSNPQAILQDDAEDIHSWVESKLIDKVGNLGKKLHTGRSRNDQVAVDIKLWCKQRVIELQESVRNLQRHLVQTAENTQQAVMPGYTHLQRAQPITFAHWCMAYVEMFDRDYSRLTDAYNRMNTCPLGSGALAGTAYAVDRDSLAHDLGFAFATRNSLDSVSDRDHIVELLSIASLSMAHLSRFAEDMIIFNSGEANFVELSDRVTSGSSLMPQKKNPDACELIRGKTGRVIGSLTSMLITLKGLPLAYNKDMQEDKEGIFDALDTWQNCVDMATFVLDELKVNVERTREAALKGYSNATELADYLVSKGVPFRDSHHIVGETVVYAIEKGKGLEDLTIPEFRQFSEVVGDDVYEILSLQSCLDKRCAKGGVSPLRVAEAIAEAKTRFA</sequence>
<proteinExistence type="inferred from homology"/>
<name>ARLY_HAEIG</name>
<accession>A5UHW3</accession>
<evidence type="ECO:0000255" key="1">
    <source>
        <dbReference type="HAMAP-Rule" id="MF_00006"/>
    </source>
</evidence>
<keyword id="KW-0028">Amino-acid biosynthesis</keyword>
<keyword id="KW-0055">Arginine biosynthesis</keyword>
<keyword id="KW-0963">Cytoplasm</keyword>
<keyword id="KW-0456">Lyase</keyword>
<feature type="chain" id="PRO_1000000483" description="Argininosuccinate lyase">
    <location>
        <begin position="1"/>
        <end position="457"/>
    </location>
</feature>